<organism>
    <name type="scientific">Lodderomyces elongisporus (strain ATCC 11503 / CBS 2605 / JCM 1781 / NBRC 1676 / NRRL YB-4239)</name>
    <name type="common">Yeast</name>
    <name type="synonym">Saccharomyces elongisporus</name>
    <dbReference type="NCBI Taxonomy" id="379508"/>
    <lineage>
        <taxon>Eukaryota</taxon>
        <taxon>Fungi</taxon>
        <taxon>Dikarya</taxon>
        <taxon>Ascomycota</taxon>
        <taxon>Saccharomycotina</taxon>
        <taxon>Pichiomycetes</taxon>
        <taxon>Debaryomycetaceae</taxon>
        <taxon>Candida/Lodderomyces clade</taxon>
        <taxon>Lodderomyces</taxon>
    </lineage>
</organism>
<reference key="1">
    <citation type="journal article" date="2009" name="Nature">
        <title>Evolution of pathogenicity and sexual reproduction in eight Candida genomes.</title>
        <authorList>
            <person name="Butler G."/>
            <person name="Rasmussen M.D."/>
            <person name="Lin M.F."/>
            <person name="Santos M.A.S."/>
            <person name="Sakthikumar S."/>
            <person name="Munro C.A."/>
            <person name="Rheinbay E."/>
            <person name="Grabherr M."/>
            <person name="Forche A."/>
            <person name="Reedy J.L."/>
            <person name="Agrafioti I."/>
            <person name="Arnaud M.B."/>
            <person name="Bates S."/>
            <person name="Brown A.J.P."/>
            <person name="Brunke S."/>
            <person name="Costanzo M.C."/>
            <person name="Fitzpatrick D.A."/>
            <person name="de Groot P.W.J."/>
            <person name="Harris D."/>
            <person name="Hoyer L.L."/>
            <person name="Hube B."/>
            <person name="Klis F.M."/>
            <person name="Kodira C."/>
            <person name="Lennard N."/>
            <person name="Logue M.E."/>
            <person name="Martin R."/>
            <person name="Neiman A.M."/>
            <person name="Nikolaou E."/>
            <person name="Quail M.A."/>
            <person name="Quinn J."/>
            <person name="Santos M.C."/>
            <person name="Schmitzberger F.F."/>
            <person name="Sherlock G."/>
            <person name="Shah P."/>
            <person name="Silverstein K.A.T."/>
            <person name="Skrzypek M.S."/>
            <person name="Soll D."/>
            <person name="Staggs R."/>
            <person name="Stansfield I."/>
            <person name="Stumpf M.P.H."/>
            <person name="Sudbery P.E."/>
            <person name="Srikantha T."/>
            <person name="Zeng Q."/>
            <person name="Berman J."/>
            <person name="Berriman M."/>
            <person name="Heitman J."/>
            <person name="Gow N.A.R."/>
            <person name="Lorenz M.C."/>
            <person name="Birren B.W."/>
            <person name="Kellis M."/>
            <person name="Cuomo C.A."/>
        </authorList>
    </citation>
    <scope>NUCLEOTIDE SEQUENCE [LARGE SCALE GENOMIC DNA]</scope>
    <source>
        <strain>ATCC 11503 / BCRC 21390 / CBS 2605 / JCM 1781 / NBRC 1676 / NRRL YB-4239</strain>
    </source>
</reference>
<keyword id="KW-0496">Mitochondrion</keyword>
<keyword id="KW-1185">Reference proteome</keyword>
<keyword id="KW-0687">Ribonucleoprotein</keyword>
<keyword id="KW-0689">Ribosomal protein</keyword>
<keyword id="KW-0809">Transit peptide</keyword>
<proteinExistence type="inferred from homology"/>
<evidence type="ECO:0000250" key="1"/>
<evidence type="ECO:0000255" key="2"/>
<evidence type="ECO:0000305" key="3"/>
<dbReference type="EMBL" id="CH981532">
    <property type="protein sequence ID" value="EDK47221.1"/>
    <property type="molecule type" value="Genomic_DNA"/>
</dbReference>
<dbReference type="RefSeq" id="XP_001523556.1">
    <property type="nucleotide sequence ID" value="XM_001523506.1"/>
</dbReference>
<dbReference type="SMR" id="A5E713"/>
<dbReference type="FunCoup" id="A5E713">
    <property type="interactions" value="210"/>
</dbReference>
<dbReference type="STRING" id="379508.A5E713"/>
<dbReference type="GeneID" id="5230484"/>
<dbReference type="KEGG" id="lel:PVL30_002502"/>
<dbReference type="VEuPathDB" id="FungiDB:LELG_05402"/>
<dbReference type="eggNOG" id="KOG3331">
    <property type="taxonomic scope" value="Eukaryota"/>
</dbReference>
<dbReference type="HOGENOM" id="CLU_872105_0_0_1"/>
<dbReference type="InParanoid" id="A5E713"/>
<dbReference type="OMA" id="IRTTMWR"/>
<dbReference type="OrthoDB" id="270763at2759"/>
<dbReference type="Proteomes" id="UP000001996">
    <property type="component" value="Unassembled WGS sequence"/>
</dbReference>
<dbReference type="GO" id="GO:0005762">
    <property type="term" value="C:mitochondrial large ribosomal subunit"/>
    <property type="evidence" value="ECO:0007669"/>
    <property type="project" value="TreeGrafter"/>
</dbReference>
<dbReference type="GO" id="GO:0003735">
    <property type="term" value="F:structural constituent of ribosome"/>
    <property type="evidence" value="ECO:0007669"/>
    <property type="project" value="InterPro"/>
</dbReference>
<dbReference type="GO" id="GO:0032543">
    <property type="term" value="P:mitochondrial translation"/>
    <property type="evidence" value="ECO:0007669"/>
    <property type="project" value="TreeGrafter"/>
</dbReference>
<dbReference type="Gene3D" id="6.10.140.1190">
    <property type="match status" value="1"/>
</dbReference>
<dbReference type="Gene3D" id="6.10.330.20">
    <property type="match status" value="1"/>
</dbReference>
<dbReference type="InterPro" id="IPR038340">
    <property type="entry name" value="MRP-L47_sf"/>
</dbReference>
<dbReference type="InterPro" id="IPR010729">
    <property type="entry name" value="Ribosomal_uL29_mit"/>
</dbReference>
<dbReference type="PANTHER" id="PTHR21183:SF18">
    <property type="entry name" value="LARGE RIBOSOMAL SUBUNIT PROTEIN UL29M"/>
    <property type="match status" value="1"/>
</dbReference>
<dbReference type="PANTHER" id="PTHR21183">
    <property type="entry name" value="RIBOSOMAL PROTEIN L47, MITOCHONDRIAL-RELATED"/>
    <property type="match status" value="1"/>
</dbReference>
<dbReference type="Pfam" id="PF06984">
    <property type="entry name" value="MRP-L47"/>
    <property type="match status" value="1"/>
</dbReference>
<accession>A5E713</accession>
<sequence>MSITSIRALLRSAVSLARTKPLRFTNLKDIKLRPPIPPTVENFQVSPDHPLWQFFPEGNQTTNAIREQDDLDHDSREWTSAELRQKSFEDLHRLWYIILKERNILAREVRLAESIGMRDVKQFNNIDYKLIKSLRRIKQVLLERHIAFERSQASPSVQEEKNEYLEEFSERYLNAEGKEIEEMDEKLDRLQYAFFGIEPTMDIETLQDDIDVNFIKGMEYSSNLKAQKYNKLNPESELELPLRGPMEELPFLLFDVEDAVQQVKELRESGQSRELYKIETIPFLSKAIKSHLEGQE</sequence>
<feature type="transit peptide" description="Mitochondrion" evidence="2">
    <location>
        <begin position="1"/>
        <end position="19"/>
    </location>
</feature>
<feature type="chain" id="PRO_0000372404" description="Large ribosomal subunit protein uL29m">
    <location>
        <begin position="20"/>
        <end position="296"/>
    </location>
</feature>
<gene>
    <name type="primary">MRPL4</name>
    <name type="ORF">LELG_05402</name>
</gene>
<protein>
    <recommendedName>
        <fullName evidence="3">Large ribosomal subunit protein uL29m</fullName>
    </recommendedName>
    <alternativeName>
        <fullName>54S ribosomal protein L4, mitochondrial</fullName>
    </alternativeName>
</protein>
<comment type="subunit">
    <text evidence="1">Component of the mitochondrial large ribosomal subunit. Mature mitochondrial ribosomes consist of a small (37S) and a large (54S) subunit. The 37S subunit contains at least 33 different proteins and 1 molecule of RNA (15S). The 54S subunit contains at least 45 different proteins and 1 molecule of RNA (21S) (By similarity).</text>
</comment>
<comment type="subcellular location">
    <subcellularLocation>
        <location evidence="1">Mitochondrion</location>
    </subcellularLocation>
</comment>
<comment type="similarity">
    <text evidence="3">Belongs to the universal ribosomal protein uL29 family.</text>
</comment>
<name>RM04_LODEL</name>